<feature type="signal peptide" evidence="1">
    <location>
        <begin position="1"/>
        <end position="17"/>
    </location>
</feature>
<feature type="chain" id="PRO_0000018210" description="Intermembrane phospholipid transport system lipoprotein MlaA">
    <location>
        <begin position="18"/>
        <end position="251"/>
    </location>
</feature>
<feature type="region of interest" description="Disordered" evidence="2">
    <location>
        <begin position="228"/>
        <end position="251"/>
    </location>
</feature>
<feature type="lipid moiety-binding region" description="N-palmitoyl cysteine" evidence="1">
    <location>
        <position position="18"/>
    </location>
</feature>
<feature type="lipid moiety-binding region" description="S-diacylglycerol cysteine" evidence="1">
    <location>
        <position position="18"/>
    </location>
</feature>
<feature type="sequence conflict" description="In Ref. 1; no nucleotide entry." evidence="4" ref="1">
    <original>MKLR</original>
    <variation>YEAS</variation>
    <location>
        <begin position="1"/>
        <end position="4"/>
    </location>
</feature>
<evidence type="ECO:0000255" key="1">
    <source>
        <dbReference type="PROSITE-ProRule" id="PRU00303"/>
    </source>
</evidence>
<evidence type="ECO:0000256" key="2">
    <source>
        <dbReference type="SAM" id="MobiDB-lite"/>
    </source>
</evidence>
<evidence type="ECO:0000269" key="3">
    <source>
    </source>
</evidence>
<evidence type="ECO:0000305" key="4"/>
<evidence type="ECO:0000305" key="5">
    <source>
    </source>
</evidence>
<sequence>MKLRLSALALGTTLLVGCASSGTDQQGRSDPLEGFNRTMYNFNFNVLDPYIVRPVAVAWRDYVPQPARNGLSNFTGNLEEPAVMVNYFLQGDPYQGMVHFTRFFLNTILGMGGFIDVAGMANPKLQRTEPHRFGSTLGHYGVGYGPYVQLPFYGSFTLRDDGGDMADGFYPVLSWLTWPMSVGKWTLEGIETRAQLLDSDGLLRQSSDPYIMVREAYFQRHDFIANGGELKPQENPNAQAIQDDLKDIDSE</sequence>
<comment type="function">
    <text evidence="3">Involved in a phospholipid transport pathway that maintains lipid asymmetry in the outer membrane by retrograde trafficking of phospholipids from the outer membrane to the inner membrane.</text>
</comment>
<comment type="interaction">
    <interactant intactId="EBI-1128511">
        <id>P76506</id>
    </interactant>
    <interactant intactId="EBI-371155">
        <id>P06996</id>
        <label>ompC</label>
    </interactant>
    <organismsDiffer>false</organismsDiffer>
    <experiments>4</experiments>
</comment>
<comment type="interaction">
    <interactant intactId="EBI-1128511">
        <id>P76506</id>
    </interactant>
    <interactant intactId="EBI-371336">
        <id>P02931</id>
        <label>ompF</label>
    </interactant>
    <organismsDiffer>false</organismsDiffer>
    <experiments>4</experiments>
</comment>
<comment type="subcellular location">
    <subcellularLocation>
        <location evidence="5">Cell outer membrane</location>
        <topology evidence="1 5">Lipid-anchor</topology>
    </subcellularLocation>
</comment>
<comment type="disruption phenotype">
    <text evidence="3">Mutation leads to accumulation of phospholipid in the outer leaflet of the outer membrane and increased outer membrane permeability. It confers sensitivity to SDS-EDTA.</text>
</comment>
<comment type="similarity">
    <text evidence="4">Belongs to the MlaA family.</text>
</comment>
<organism>
    <name type="scientific">Escherichia coli (strain K12)</name>
    <dbReference type="NCBI Taxonomy" id="83333"/>
    <lineage>
        <taxon>Bacteria</taxon>
        <taxon>Pseudomonadati</taxon>
        <taxon>Pseudomonadota</taxon>
        <taxon>Gammaproteobacteria</taxon>
        <taxon>Enterobacterales</taxon>
        <taxon>Enterobacteriaceae</taxon>
        <taxon>Escherichia</taxon>
    </lineage>
</organism>
<proteinExistence type="evidence at protein level"/>
<gene>
    <name type="primary">mlaA</name>
    <name type="synonym">vacJ</name>
    <name type="ordered locus">b2346</name>
    <name type="ordered locus">JW2343</name>
</gene>
<dbReference type="EMBL" id="U00096">
    <property type="protein sequence ID" value="AAC75406.1"/>
    <property type="molecule type" value="Genomic_DNA"/>
</dbReference>
<dbReference type="EMBL" id="AP009048">
    <property type="protein sequence ID" value="BAA16206.2"/>
    <property type="molecule type" value="Genomic_DNA"/>
</dbReference>
<dbReference type="PIR" id="H65007">
    <property type="entry name" value="H65007"/>
</dbReference>
<dbReference type="RefSeq" id="NP_416848.1">
    <property type="nucleotide sequence ID" value="NC_000913.3"/>
</dbReference>
<dbReference type="RefSeq" id="WP_000776765.1">
    <property type="nucleotide sequence ID" value="NZ_LN832404.1"/>
</dbReference>
<dbReference type="PDB" id="8I8R">
    <property type="method" value="EM"/>
    <property type="resolution" value="2.93 A"/>
    <property type="chains" value="D=18-251"/>
</dbReference>
<dbReference type="PDB" id="8I8X">
    <property type="method" value="EM"/>
    <property type="resolution" value="3.25 A"/>
    <property type="chains" value="D=18-251"/>
</dbReference>
<dbReference type="PDBsum" id="8I8R"/>
<dbReference type="PDBsum" id="8I8X"/>
<dbReference type="EMDB" id="EMD-35250"/>
<dbReference type="EMDB" id="EMD-35253"/>
<dbReference type="SMR" id="P76506"/>
<dbReference type="BioGRID" id="4260538">
    <property type="interactions" value="184"/>
</dbReference>
<dbReference type="BioGRID" id="849956">
    <property type="interactions" value="3"/>
</dbReference>
<dbReference type="FunCoup" id="P76506">
    <property type="interactions" value="139"/>
</dbReference>
<dbReference type="IntAct" id="P76506">
    <property type="interactions" value="8"/>
</dbReference>
<dbReference type="STRING" id="511145.b2346"/>
<dbReference type="TCDB" id="3.A.1.27.3">
    <property type="family name" value="the atp-binding cassette (abc) superfamily"/>
</dbReference>
<dbReference type="jPOST" id="P76506"/>
<dbReference type="PaxDb" id="511145-b2346"/>
<dbReference type="EnsemblBacteria" id="AAC75406">
    <property type="protein sequence ID" value="AAC75406"/>
    <property type="gene ID" value="b2346"/>
</dbReference>
<dbReference type="GeneID" id="945582"/>
<dbReference type="KEGG" id="ecj:JW2343"/>
<dbReference type="KEGG" id="eco:b2346"/>
<dbReference type="KEGG" id="ecoc:C3026_13055"/>
<dbReference type="PATRIC" id="fig|1411691.4.peg.4386"/>
<dbReference type="EchoBASE" id="EB4024"/>
<dbReference type="eggNOG" id="COG2853">
    <property type="taxonomic scope" value="Bacteria"/>
</dbReference>
<dbReference type="HOGENOM" id="CLU_059326_3_2_6"/>
<dbReference type="InParanoid" id="P76506"/>
<dbReference type="OMA" id="RKQHKSM"/>
<dbReference type="OrthoDB" id="9785326at2"/>
<dbReference type="PhylomeDB" id="P76506"/>
<dbReference type="BioCyc" id="EcoCyc:G7216-MONOMER"/>
<dbReference type="PRO" id="PR:P76506"/>
<dbReference type="Proteomes" id="UP000000625">
    <property type="component" value="Chromosome"/>
</dbReference>
<dbReference type="GO" id="GO:0009279">
    <property type="term" value="C:cell outer membrane"/>
    <property type="evidence" value="ECO:0007669"/>
    <property type="project" value="UniProtKB-SubCell"/>
</dbReference>
<dbReference type="GO" id="GO:0120010">
    <property type="term" value="P:intermembrane phospholipid transfer"/>
    <property type="evidence" value="ECO:0000314"/>
    <property type="project" value="EcoCyc"/>
</dbReference>
<dbReference type="InterPro" id="IPR007428">
    <property type="entry name" value="MlaA"/>
</dbReference>
<dbReference type="NCBIfam" id="NF011672">
    <property type="entry name" value="PRK15091.1"/>
    <property type="match status" value="1"/>
</dbReference>
<dbReference type="PANTHER" id="PTHR30035:SF3">
    <property type="entry name" value="INTERMEMBRANE PHOSPHOLIPID TRANSPORT SYSTEM LIPOPROTEIN MLAA"/>
    <property type="match status" value="1"/>
</dbReference>
<dbReference type="PANTHER" id="PTHR30035">
    <property type="entry name" value="LIPOPROTEIN VACJ-RELATED"/>
    <property type="match status" value="1"/>
</dbReference>
<dbReference type="Pfam" id="PF04333">
    <property type="entry name" value="MlaA"/>
    <property type="match status" value="1"/>
</dbReference>
<dbReference type="PRINTS" id="PR01805">
    <property type="entry name" value="VACJLIPOPROT"/>
</dbReference>
<dbReference type="PROSITE" id="PS51257">
    <property type="entry name" value="PROKAR_LIPOPROTEIN"/>
    <property type="match status" value="1"/>
</dbReference>
<name>MLAA_ECOLI</name>
<accession>P76506</accession>
<accession>P76941</accession>
<keyword id="KW-0002">3D-structure</keyword>
<keyword id="KW-0998">Cell outer membrane</keyword>
<keyword id="KW-0449">Lipoprotein</keyword>
<keyword id="KW-0472">Membrane</keyword>
<keyword id="KW-0564">Palmitate</keyword>
<keyword id="KW-1185">Reference proteome</keyword>
<keyword id="KW-0732">Signal</keyword>
<reference key="1">
    <citation type="journal article" date="1997" name="DNA Res.">
        <title>Construction of a contiguous 874-kb sequence of the Escherichia coli-K12 genome corresponding to 50.0-68.8 min on the linkage map and analysis of its sequence features.</title>
        <authorList>
            <person name="Yamamoto Y."/>
            <person name="Aiba H."/>
            <person name="Baba T."/>
            <person name="Hayashi K."/>
            <person name="Inada T."/>
            <person name="Isono K."/>
            <person name="Itoh T."/>
            <person name="Kimura S."/>
            <person name="Kitagawa M."/>
            <person name="Makino K."/>
            <person name="Miki T."/>
            <person name="Mitsuhashi N."/>
            <person name="Mizobuchi K."/>
            <person name="Mori H."/>
            <person name="Nakade S."/>
            <person name="Nakamura Y."/>
            <person name="Nashimoto H."/>
            <person name="Oshima T."/>
            <person name="Oyama S."/>
            <person name="Saito N."/>
            <person name="Sampei G."/>
            <person name="Satoh Y."/>
            <person name="Sivasundaram S."/>
            <person name="Tagami H."/>
            <person name="Takahashi H."/>
            <person name="Takeda J."/>
            <person name="Takemoto K."/>
            <person name="Uehara K."/>
            <person name="Wada C."/>
            <person name="Yamagata S."/>
            <person name="Horiuchi T."/>
        </authorList>
    </citation>
    <scope>NUCLEOTIDE SEQUENCE [LARGE SCALE GENOMIC DNA]</scope>
    <source>
        <strain>K12 / W3110 / ATCC 27325 / DSM 5911</strain>
    </source>
</reference>
<reference key="2">
    <citation type="journal article" date="1997" name="Science">
        <title>The complete genome sequence of Escherichia coli K-12.</title>
        <authorList>
            <person name="Blattner F.R."/>
            <person name="Plunkett G. III"/>
            <person name="Bloch C.A."/>
            <person name="Perna N.T."/>
            <person name="Burland V."/>
            <person name="Riley M."/>
            <person name="Collado-Vides J."/>
            <person name="Glasner J.D."/>
            <person name="Rode C.K."/>
            <person name="Mayhew G.F."/>
            <person name="Gregor J."/>
            <person name="Davis N.W."/>
            <person name="Kirkpatrick H.A."/>
            <person name="Goeden M.A."/>
            <person name="Rose D.J."/>
            <person name="Mau B."/>
            <person name="Shao Y."/>
        </authorList>
    </citation>
    <scope>NUCLEOTIDE SEQUENCE [LARGE SCALE GENOMIC DNA]</scope>
    <source>
        <strain>K12 / MG1655 / ATCC 47076</strain>
    </source>
</reference>
<reference key="3">
    <citation type="journal article" date="2006" name="Mol. Syst. Biol.">
        <title>Highly accurate genome sequences of Escherichia coli K-12 strains MG1655 and W3110.</title>
        <authorList>
            <person name="Hayashi K."/>
            <person name="Morooka N."/>
            <person name="Yamamoto Y."/>
            <person name="Fujita K."/>
            <person name="Isono K."/>
            <person name="Choi S."/>
            <person name="Ohtsubo E."/>
            <person name="Baba T."/>
            <person name="Wanner B.L."/>
            <person name="Mori H."/>
            <person name="Horiuchi T."/>
        </authorList>
    </citation>
    <scope>NUCLEOTIDE SEQUENCE [LARGE SCALE GENOMIC DNA]</scope>
    <scope>SEQUENCE REVISION TO 1-4</scope>
    <source>
        <strain>K12 / W3110 / ATCC 27325 / DSM 5911</strain>
    </source>
</reference>
<reference key="4">
    <citation type="journal article" date="2009" name="Proc. Natl. Acad. Sci. U.S.A.">
        <title>An ABC transport system that maintains lipid asymmetry in the gram-negative outer membrane.</title>
        <authorList>
            <person name="Malinverni J.C."/>
            <person name="Silhavy T.J."/>
        </authorList>
    </citation>
    <scope>FUNCTION IN PHOSPHOLIPID TRANSPORT</scope>
    <scope>SUBCELLULAR LOCATION</scope>
    <scope>DISRUPTION PHENOTYPE</scope>
    <source>
        <strain>K12 / MC4100 / JA176</strain>
    </source>
</reference>
<protein>
    <recommendedName>
        <fullName evidence="4">Intermembrane phospholipid transport system lipoprotein MlaA</fullName>
    </recommendedName>
</protein>